<evidence type="ECO:0000255" key="1">
    <source>
        <dbReference type="PROSITE-ProRule" id="PRU00434"/>
    </source>
</evidence>
<evidence type="ECO:0000305" key="2"/>
<protein>
    <recommendedName>
        <fullName>Uncharacterized ABC transporter ATP-binding protein YdbJ</fullName>
    </recommendedName>
</protein>
<reference key="1">
    <citation type="submission" date="1997-03" db="EMBL/GenBank/DDBJ databases">
        <title>A 148 kbp sequence of the region between 35 and 47 degree of the Bacillus subtilis genome.</title>
        <authorList>
            <person name="Kasahara Y."/>
            <person name="Nakai S."/>
            <person name="Lee S."/>
            <person name="Sadaie Y."/>
            <person name="Ogasawara N."/>
        </authorList>
    </citation>
    <scope>NUCLEOTIDE SEQUENCE [GENOMIC DNA]</scope>
    <source>
        <strain>168</strain>
    </source>
</reference>
<reference key="2">
    <citation type="journal article" date="1997" name="Nature">
        <title>The complete genome sequence of the Gram-positive bacterium Bacillus subtilis.</title>
        <authorList>
            <person name="Kunst F."/>
            <person name="Ogasawara N."/>
            <person name="Moszer I."/>
            <person name="Albertini A.M."/>
            <person name="Alloni G."/>
            <person name="Azevedo V."/>
            <person name="Bertero M.G."/>
            <person name="Bessieres P."/>
            <person name="Bolotin A."/>
            <person name="Borchert S."/>
            <person name="Borriss R."/>
            <person name="Boursier L."/>
            <person name="Brans A."/>
            <person name="Braun M."/>
            <person name="Brignell S.C."/>
            <person name="Bron S."/>
            <person name="Brouillet S."/>
            <person name="Bruschi C.V."/>
            <person name="Caldwell B."/>
            <person name="Capuano V."/>
            <person name="Carter N.M."/>
            <person name="Choi S.-K."/>
            <person name="Codani J.-J."/>
            <person name="Connerton I.F."/>
            <person name="Cummings N.J."/>
            <person name="Daniel R.A."/>
            <person name="Denizot F."/>
            <person name="Devine K.M."/>
            <person name="Duesterhoeft A."/>
            <person name="Ehrlich S.D."/>
            <person name="Emmerson P.T."/>
            <person name="Entian K.-D."/>
            <person name="Errington J."/>
            <person name="Fabret C."/>
            <person name="Ferrari E."/>
            <person name="Foulger D."/>
            <person name="Fritz C."/>
            <person name="Fujita M."/>
            <person name="Fujita Y."/>
            <person name="Fuma S."/>
            <person name="Galizzi A."/>
            <person name="Galleron N."/>
            <person name="Ghim S.-Y."/>
            <person name="Glaser P."/>
            <person name="Goffeau A."/>
            <person name="Golightly E.J."/>
            <person name="Grandi G."/>
            <person name="Guiseppi G."/>
            <person name="Guy B.J."/>
            <person name="Haga K."/>
            <person name="Haiech J."/>
            <person name="Harwood C.R."/>
            <person name="Henaut A."/>
            <person name="Hilbert H."/>
            <person name="Holsappel S."/>
            <person name="Hosono S."/>
            <person name="Hullo M.-F."/>
            <person name="Itaya M."/>
            <person name="Jones L.-M."/>
            <person name="Joris B."/>
            <person name="Karamata D."/>
            <person name="Kasahara Y."/>
            <person name="Klaerr-Blanchard M."/>
            <person name="Klein C."/>
            <person name="Kobayashi Y."/>
            <person name="Koetter P."/>
            <person name="Koningstein G."/>
            <person name="Krogh S."/>
            <person name="Kumano M."/>
            <person name="Kurita K."/>
            <person name="Lapidus A."/>
            <person name="Lardinois S."/>
            <person name="Lauber J."/>
            <person name="Lazarevic V."/>
            <person name="Lee S.-M."/>
            <person name="Levine A."/>
            <person name="Liu H."/>
            <person name="Masuda S."/>
            <person name="Mauel C."/>
            <person name="Medigue C."/>
            <person name="Medina N."/>
            <person name="Mellado R.P."/>
            <person name="Mizuno M."/>
            <person name="Moestl D."/>
            <person name="Nakai S."/>
            <person name="Noback M."/>
            <person name="Noone D."/>
            <person name="O'Reilly M."/>
            <person name="Ogawa K."/>
            <person name="Ogiwara A."/>
            <person name="Oudega B."/>
            <person name="Park S.-H."/>
            <person name="Parro V."/>
            <person name="Pohl T.M."/>
            <person name="Portetelle D."/>
            <person name="Porwollik S."/>
            <person name="Prescott A.M."/>
            <person name="Presecan E."/>
            <person name="Pujic P."/>
            <person name="Purnelle B."/>
            <person name="Rapoport G."/>
            <person name="Rey M."/>
            <person name="Reynolds S."/>
            <person name="Rieger M."/>
            <person name="Rivolta C."/>
            <person name="Rocha E."/>
            <person name="Roche B."/>
            <person name="Rose M."/>
            <person name="Sadaie Y."/>
            <person name="Sato T."/>
            <person name="Scanlan E."/>
            <person name="Schleich S."/>
            <person name="Schroeter R."/>
            <person name="Scoffone F."/>
            <person name="Sekiguchi J."/>
            <person name="Sekowska A."/>
            <person name="Seror S.J."/>
            <person name="Serror P."/>
            <person name="Shin B.-S."/>
            <person name="Soldo B."/>
            <person name="Sorokin A."/>
            <person name="Tacconi E."/>
            <person name="Takagi T."/>
            <person name="Takahashi H."/>
            <person name="Takemaru K."/>
            <person name="Takeuchi M."/>
            <person name="Tamakoshi A."/>
            <person name="Tanaka T."/>
            <person name="Terpstra P."/>
            <person name="Tognoni A."/>
            <person name="Tosato V."/>
            <person name="Uchiyama S."/>
            <person name="Vandenbol M."/>
            <person name="Vannier F."/>
            <person name="Vassarotti A."/>
            <person name="Viari A."/>
            <person name="Wambutt R."/>
            <person name="Wedler E."/>
            <person name="Wedler H."/>
            <person name="Weitzenegger T."/>
            <person name="Winters P."/>
            <person name="Wipat A."/>
            <person name="Yamamoto H."/>
            <person name="Yamane K."/>
            <person name="Yasumoto K."/>
            <person name="Yata K."/>
            <person name="Yoshida K."/>
            <person name="Yoshikawa H.-F."/>
            <person name="Zumstein E."/>
            <person name="Yoshikawa H."/>
            <person name="Danchin A."/>
        </authorList>
    </citation>
    <scope>NUCLEOTIDE SEQUENCE [LARGE SCALE GENOMIC DNA]</scope>
    <source>
        <strain>168</strain>
    </source>
</reference>
<name>YDBJ_BACSU</name>
<gene>
    <name type="primary">ydbJ</name>
    <name type="ordered locus">BSU04490</name>
</gene>
<accession>P96605</accession>
<accession>Q797L5</accession>
<proteinExistence type="inferred from homology"/>
<organism>
    <name type="scientific">Bacillus subtilis (strain 168)</name>
    <dbReference type="NCBI Taxonomy" id="224308"/>
    <lineage>
        <taxon>Bacteria</taxon>
        <taxon>Bacillati</taxon>
        <taxon>Bacillota</taxon>
        <taxon>Bacilli</taxon>
        <taxon>Bacillales</taxon>
        <taxon>Bacillaceae</taxon>
        <taxon>Bacillus</taxon>
    </lineage>
</organism>
<sequence>MAEPILHIEGLDKKIGSKQILKQISMDVMEGEIIGLLGPNGSGKTTLIRIIVGLLKQNSGSVTISGFQHDTEFEKAMEAVGAIVENPEFYPYLTGWENLKHFANMHKKIADERLDEVVERVGLTSAIHDKVKTYSLGMRQRLGIAQAILHRPKLLILDEPTNGLDPAGMKDFRDHIKELAEMEGTAVLFATHLLREVEDLCDRVIIIQKGEIKAEVSLQGTDQTTEKAIIEVQPQEKALNWLTGNQYQAESQDGTIVVEVAKENIPELNRSLVGQDLNVFSITPYTQSLEDEFIKATTAHQEEGEELV</sequence>
<dbReference type="EMBL" id="AB001488">
    <property type="protein sequence ID" value="BAA19286.1"/>
    <property type="molecule type" value="Genomic_DNA"/>
</dbReference>
<dbReference type="EMBL" id="AL009126">
    <property type="protein sequence ID" value="CAB12256.1"/>
    <property type="molecule type" value="Genomic_DNA"/>
</dbReference>
<dbReference type="PIR" id="E69771">
    <property type="entry name" value="E69771"/>
</dbReference>
<dbReference type="RefSeq" id="NP_388330.1">
    <property type="nucleotide sequence ID" value="NC_000964.3"/>
</dbReference>
<dbReference type="RefSeq" id="WP_003246573.1">
    <property type="nucleotide sequence ID" value="NZ_OZ025638.1"/>
</dbReference>
<dbReference type="SMR" id="P96605"/>
<dbReference type="FunCoup" id="P96605">
    <property type="interactions" value="482"/>
</dbReference>
<dbReference type="STRING" id="224308.BSU04490"/>
<dbReference type="PaxDb" id="224308-BSU04490"/>
<dbReference type="EnsemblBacteria" id="CAB12256">
    <property type="protein sequence ID" value="CAB12256"/>
    <property type="gene ID" value="BSU_04490"/>
</dbReference>
<dbReference type="GeneID" id="938228"/>
<dbReference type="KEGG" id="bsu:BSU04490"/>
<dbReference type="PATRIC" id="fig|224308.179.peg.476"/>
<dbReference type="eggNOG" id="COG1131">
    <property type="taxonomic scope" value="Bacteria"/>
</dbReference>
<dbReference type="InParanoid" id="P96605"/>
<dbReference type="OrthoDB" id="9804819at2"/>
<dbReference type="PhylomeDB" id="P96605"/>
<dbReference type="BioCyc" id="BSUB:BSU04490-MONOMER"/>
<dbReference type="Proteomes" id="UP000001570">
    <property type="component" value="Chromosome"/>
</dbReference>
<dbReference type="GO" id="GO:0005524">
    <property type="term" value="F:ATP binding"/>
    <property type="evidence" value="ECO:0007669"/>
    <property type="project" value="UniProtKB-KW"/>
</dbReference>
<dbReference type="GO" id="GO:0016887">
    <property type="term" value="F:ATP hydrolysis activity"/>
    <property type="evidence" value="ECO:0007669"/>
    <property type="project" value="InterPro"/>
</dbReference>
<dbReference type="Gene3D" id="3.40.50.300">
    <property type="entry name" value="P-loop containing nucleotide triphosphate hydrolases"/>
    <property type="match status" value="1"/>
</dbReference>
<dbReference type="InterPro" id="IPR003593">
    <property type="entry name" value="AAA+_ATPase"/>
</dbReference>
<dbReference type="InterPro" id="IPR003439">
    <property type="entry name" value="ABC_transporter-like_ATP-bd"/>
</dbReference>
<dbReference type="InterPro" id="IPR017871">
    <property type="entry name" value="ABC_transporter-like_CS"/>
</dbReference>
<dbReference type="InterPro" id="IPR027417">
    <property type="entry name" value="P-loop_NTPase"/>
</dbReference>
<dbReference type="PANTHER" id="PTHR43335">
    <property type="entry name" value="ABC TRANSPORTER, ATP-BINDING PROTEIN"/>
    <property type="match status" value="1"/>
</dbReference>
<dbReference type="PANTHER" id="PTHR43335:SF4">
    <property type="entry name" value="ABC TRANSPORTER, ATP-BINDING PROTEIN"/>
    <property type="match status" value="1"/>
</dbReference>
<dbReference type="Pfam" id="PF00005">
    <property type="entry name" value="ABC_tran"/>
    <property type="match status" value="1"/>
</dbReference>
<dbReference type="SMART" id="SM00382">
    <property type="entry name" value="AAA"/>
    <property type="match status" value="1"/>
</dbReference>
<dbReference type="SUPFAM" id="SSF52540">
    <property type="entry name" value="P-loop containing nucleoside triphosphate hydrolases"/>
    <property type="match status" value="1"/>
</dbReference>
<dbReference type="PROSITE" id="PS00211">
    <property type="entry name" value="ABC_TRANSPORTER_1"/>
    <property type="match status" value="1"/>
</dbReference>
<dbReference type="PROSITE" id="PS50893">
    <property type="entry name" value="ABC_TRANSPORTER_2"/>
    <property type="match status" value="1"/>
</dbReference>
<feature type="chain" id="PRO_0000360061" description="Uncharacterized ABC transporter ATP-binding protein YdbJ">
    <location>
        <begin position="1"/>
        <end position="308"/>
    </location>
</feature>
<feature type="domain" description="ABC transporter" evidence="1">
    <location>
        <begin position="6"/>
        <end position="234"/>
    </location>
</feature>
<feature type="binding site" evidence="1">
    <location>
        <begin position="38"/>
        <end position="45"/>
    </location>
    <ligand>
        <name>ATP</name>
        <dbReference type="ChEBI" id="CHEBI:30616"/>
    </ligand>
</feature>
<comment type="similarity">
    <text evidence="2">Belongs to the ABC transporter superfamily.</text>
</comment>
<keyword id="KW-0067">ATP-binding</keyword>
<keyword id="KW-0547">Nucleotide-binding</keyword>
<keyword id="KW-1185">Reference proteome</keyword>
<keyword id="KW-0813">Transport</keyword>